<organism>
    <name type="scientific">Dictyoglomus thermophilum (strain ATCC 35947 / DSM 3960 / H-6-12)</name>
    <dbReference type="NCBI Taxonomy" id="309799"/>
    <lineage>
        <taxon>Bacteria</taxon>
        <taxon>Pseudomonadati</taxon>
        <taxon>Dictyoglomota</taxon>
        <taxon>Dictyoglomia</taxon>
        <taxon>Dictyoglomales</taxon>
        <taxon>Dictyoglomaceae</taxon>
        <taxon>Dictyoglomus</taxon>
    </lineage>
</organism>
<evidence type="ECO:0000255" key="1">
    <source>
        <dbReference type="HAMAP-Rule" id="MF_01865"/>
    </source>
</evidence>
<evidence type="ECO:0000255" key="2">
    <source>
        <dbReference type="PROSITE-ProRule" id="PRU01266"/>
    </source>
</evidence>
<protein>
    <recommendedName>
        <fullName evidence="1">Ribosomal protein uS12 methylthiotransferase RimO</fullName>
        <shortName evidence="1">uS12 MTTase</shortName>
        <shortName evidence="1">uS12 methylthiotransferase</shortName>
        <ecNumber evidence="1">2.8.4.4</ecNumber>
    </recommendedName>
    <alternativeName>
        <fullName evidence="1">Ribosomal protein uS12 (aspartate-C(3))-methylthiotransferase</fullName>
    </alternativeName>
    <alternativeName>
        <fullName evidence="1">Ribosome maturation factor RimO</fullName>
    </alternativeName>
</protein>
<keyword id="KW-0004">4Fe-4S</keyword>
<keyword id="KW-0963">Cytoplasm</keyword>
<keyword id="KW-0408">Iron</keyword>
<keyword id="KW-0411">Iron-sulfur</keyword>
<keyword id="KW-0479">Metal-binding</keyword>
<keyword id="KW-0949">S-adenosyl-L-methionine</keyword>
<keyword id="KW-0808">Transferase</keyword>
<dbReference type="EC" id="2.8.4.4" evidence="1"/>
<dbReference type="EMBL" id="CP001146">
    <property type="protein sequence ID" value="ACI19732.1"/>
    <property type="molecule type" value="Genomic_DNA"/>
</dbReference>
<dbReference type="RefSeq" id="WP_012548364.1">
    <property type="nucleotide sequence ID" value="NC_011297.1"/>
</dbReference>
<dbReference type="SMR" id="B5YF65"/>
<dbReference type="STRING" id="309799.DICTH_1354"/>
<dbReference type="PaxDb" id="309799-DICTH_1354"/>
<dbReference type="KEGG" id="dth:DICTH_1354"/>
<dbReference type="eggNOG" id="COG0621">
    <property type="taxonomic scope" value="Bacteria"/>
</dbReference>
<dbReference type="HOGENOM" id="CLU_018697_0_1_0"/>
<dbReference type="OrthoDB" id="9805215at2"/>
<dbReference type="Proteomes" id="UP000001733">
    <property type="component" value="Chromosome"/>
</dbReference>
<dbReference type="GO" id="GO:0005829">
    <property type="term" value="C:cytosol"/>
    <property type="evidence" value="ECO:0007669"/>
    <property type="project" value="TreeGrafter"/>
</dbReference>
<dbReference type="GO" id="GO:0051539">
    <property type="term" value="F:4 iron, 4 sulfur cluster binding"/>
    <property type="evidence" value="ECO:0007669"/>
    <property type="project" value="UniProtKB-UniRule"/>
</dbReference>
<dbReference type="GO" id="GO:0035599">
    <property type="term" value="F:aspartic acid methylthiotransferase activity"/>
    <property type="evidence" value="ECO:0007669"/>
    <property type="project" value="TreeGrafter"/>
</dbReference>
<dbReference type="GO" id="GO:0046872">
    <property type="term" value="F:metal ion binding"/>
    <property type="evidence" value="ECO:0007669"/>
    <property type="project" value="UniProtKB-KW"/>
</dbReference>
<dbReference type="GO" id="GO:0103039">
    <property type="term" value="F:protein methylthiotransferase activity"/>
    <property type="evidence" value="ECO:0007669"/>
    <property type="project" value="UniProtKB-EC"/>
</dbReference>
<dbReference type="GO" id="GO:0006400">
    <property type="term" value="P:tRNA modification"/>
    <property type="evidence" value="ECO:0007669"/>
    <property type="project" value="InterPro"/>
</dbReference>
<dbReference type="CDD" id="cd01335">
    <property type="entry name" value="Radical_SAM"/>
    <property type="match status" value="1"/>
</dbReference>
<dbReference type="FunFam" id="3.40.50.12160:FF:000003">
    <property type="entry name" value="CDK5 regulatory subunit-associated protein 1"/>
    <property type="match status" value="1"/>
</dbReference>
<dbReference type="FunFam" id="2.40.50.140:FF:000210">
    <property type="entry name" value="Ribosomal protein S12 methylthiotransferase RimO"/>
    <property type="match status" value="1"/>
</dbReference>
<dbReference type="FunFam" id="3.80.30.20:FF:000001">
    <property type="entry name" value="tRNA-2-methylthio-N(6)-dimethylallyladenosine synthase 2"/>
    <property type="match status" value="1"/>
</dbReference>
<dbReference type="Gene3D" id="3.40.50.12160">
    <property type="entry name" value="Methylthiotransferase, N-terminal domain"/>
    <property type="match status" value="1"/>
</dbReference>
<dbReference type="Gene3D" id="2.40.50.140">
    <property type="entry name" value="Nucleic acid-binding proteins"/>
    <property type="match status" value="1"/>
</dbReference>
<dbReference type="Gene3D" id="3.80.30.20">
    <property type="entry name" value="tm_1862 like domain"/>
    <property type="match status" value="1"/>
</dbReference>
<dbReference type="HAMAP" id="MF_01865">
    <property type="entry name" value="MTTase_RimO"/>
    <property type="match status" value="1"/>
</dbReference>
<dbReference type="InterPro" id="IPR006638">
    <property type="entry name" value="Elp3/MiaA/NifB-like_rSAM"/>
</dbReference>
<dbReference type="InterPro" id="IPR005839">
    <property type="entry name" value="Methylthiotransferase"/>
</dbReference>
<dbReference type="InterPro" id="IPR020612">
    <property type="entry name" value="Methylthiotransferase_CS"/>
</dbReference>
<dbReference type="InterPro" id="IPR013848">
    <property type="entry name" value="Methylthiotransferase_N"/>
</dbReference>
<dbReference type="InterPro" id="IPR038135">
    <property type="entry name" value="Methylthiotransferase_N_sf"/>
</dbReference>
<dbReference type="InterPro" id="IPR012340">
    <property type="entry name" value="NA-bd_OB-fold"/>
</dbReference>
<dbReference type="InterPro" id="IPR005840">
    <property type="entry name" value="Ribosomal_uS12_MeSTrfase_RimO"/>
</dbReference>
<dbReference type="InterPro" id="IPR007197">
    <property type="entry name" value="rSAM"/>
</dbReference>
<dbReference type="InterPro" id="IPR023404">
    <property type="entry name" value="rSAM_horseshoe"/>
</dbReference>
<dbReference type="InterPro" id="IPR002792">
    <property type="entry name" value="TRAM_dom"/>
</dbReference>
<dbReference type="NCBIfam" id="TIGR01125">
    <property type="entry name" value="30S ribosomal protein S12 methylthiotransferase RimO"/>
    <property type="match status" value="1"/>
</dbReference>
<dbReference type="NCBIfam" id="TIGR00089">
    <property type="entry name" value="MiaB/RimO family radical SAM methylthiotransferase"/>
    <property type="match status" value="1"/>
</dbReference>
<dbReference type="PANTHER" id="PTHR43837">
    <property type="entry name" value="RIBOSOMAL PROTEIN S12 METHYLTHIOTRANSFERASE RIMO"/>
    <property type="match status" value="1"/>
</dbReference>
<dbReference type="PANTHER" id="PTHR43837:SF1">
    <property type="entry name" value="RIBOSOMAL PROTEIN US12 METHYLTHIOTRANSFERASE RIMO"/>
    <property type="match status" value="1"/>
</dbReference>
<dbReference type="Pfam" id="PF04055">
    <property type="entry name" value="Radical_SAM"/>
    <property type="match status" value="1"/>
</dbReference>
<dbReference type="Pfam" id="PF18693">
    <property type="entry name" value="TRAM_2"/>
    <property type="match status" value="1"/>
</dbReference>
<dbReference type="Pfam" id="PF00919">
    <property type="entry name" value="UPF0004"/>
    <property type="match status" value="1"/>
</dbReference>
<dbReference type="SFLD" id="SFLDG01082">
    <property type="entry name" value="B12-binding_domain_containing"/>
    <property type="match status" value="1"/>
</dbReference>
<dbReference type="SFLD" id="SFLDG01061">
    <property type="entry name" value="methylthiotransferase"/>
    <property type="match status" value="1"/>
</dbReference>
<dbReference type="SFLD" id="SFLDF00274">
    <property type="entry name" value="ribosomal_protein_S12_methylth"/>
    <property type="match status" value="1"/>
</dbReference>
<dbReference type="SMART" id="SM00729">
    <property type="entry name" value="Elp3"/>
    <property type="match status" value="1"/>
</dbReference>
<dbReference type="SUPFAM" id="SSF102114">
    <property type="entry name" value="Radical SAM enzymes"/>
    <property type="match status" value="1"/>
</dbReference>
<dbReference type="PROSITE" id="PS51449">
    <property type="entry name" value="MTTASE_N"/>
    <property type="match status" value="1"/>
</dbReference>
<dbReference type="PROSITE" id="PS01278">
    <property type="entry name" value="MTTASE_RADICAL"/>
    <property type="match status" value="1"/>
</dbReference>
<dbReference type="PROSITE" id="PS51918">
    <property type="entry name" value="RADICAL_SAM"/>
    <property type="match status" value="1"/>
</dbReference>
<dbReference type="PROSITE" id="PS50926">
    <property type="entry name" value="TRAM"/>
    <property type="match status" value="1"/>
</dbReference>
<comment type="function">
    <text evidence="1">Catalyzes the methylthiolation of an aspartic acid residue of ribosomal protein uS12.</text>
</comment>
<comment type="catalytic activity">
    <reaction evidence="1">
        <text>L-aspartate(89)-[ribosomal protein uS12]-hydrogen + (sulfur carrier)-SH + AH2 + 2 S-adenosyl-L-methionine = 3-methylsulfanyl-L-aspartate(89)-[ribosomal protein uS12]-hydrogen + (sulfur carrier)-H + 5'-deoxyadenosine + L-methionine + A + S-adenosyl-L-homocysteine + 2 H(+)</text>
        <dbReference type="Rhea" id="RHEA:37087"/>
        <dbReference type="Rhea" id="RHEA-COMP:10460"/>
        <dbReference type="Rhea" id="RHEA-COMP:10461"/>
        <dbReference type="Rhea" id="RHEA-COMP:14737"/>
        <dbReference type="Rhea" id="RHEA-COMP:14739"/>
        <dbReference type="ChEBI" id="CHEBI:13193"/>
        <dbReference type="ChEBI" id="CHEBI:15378"/>
        <dbReference type="ChEBI" id="CHEBI:17319"/>
        <dbReference type="ChEBI" id="CHEBI:17499"/>
        <dbReference type="ChEBI" id="CHEBI:29917"/>
        <dbReference type="ChEBI" id="CHEBI:29961"/>
        <dbReference type="ChEBI" id="CHEBI:57844"/>
        <dbReference type="ChEBI" id="CHEBI:57856"/>
        <dbReference type="ChEBI" id="CHEBI:59789"/>
        <dbReference type="ChEBI" id="CHEBI:64428"/>
        <dbReference type="ChEBI" id="CHEBI:73599"/>
        <dbReference type="EC" id="2.8.4.4"/>
    </reaction>
</comment>
<comment type="cofactor">
    <cofactor evidence="1">
        <name>[4Fe-4S] cluster</name>
        <dbReference type="ChEBI" id="CHEBI:49883"/>
    </cofactor>
    <text evidence="1">Binds 2 [4Fe-4S] clusters. One cluster is coordinated with 3 cysteines and an exchangeable S-adenosyl-L-methionine.</text>
</comment>
<comment type="subcellular location">
    <subcellularLocation>
        <location evidence="1">Cytoplasm</location>
    </subcellularLocation>
</comment>
<comment type="similarity">
    <text evidence="1">Belongs to the methylthiotransferase family. RimO subfamily.</text>
</comment>
<accession>B5YF65</accession>
<name>RIMO_DICT6</name>
<sequence>MKKAGIIHLGCSKNQVDTEILMGFLKELGYTFTPYLGEADLVLVNTCAFIKPAWQEAEENINFLKEYKENNKNLKIVVTGCYVERFEKELEDRYPFVDLFIGPGEYDKFVSLITSNGERKIHSSPASSFMYTHKMPRVLISPNFWVYVKISEGCNNFCSYCTIPFIRGRLRSRSIDDIIKEVEILVQKGVKEINLIAQDTTRYGEDLYGKSALVDLLKSIENIKGDFYVRILYSYPSRVTKDLINFIKVSEKVVPYFDIPIQHVNDEILKKMNRSYKKDDIIRVWSTIRENFEDAVIRTTVMVGFPGETEENFEELIAFIKAYPFDRLGAFTYYNEEGTISKNFDGQIDEDEKIRRYDILMSTQKEISKKLNAKLLGREFDVIIENEKGKYFIGRSWREAPEVDGVIMIPKEGSRSISIGDRVRVKIKKYRAYDLLGELV</sequence>
<proteinExistence type="inferred from homology"/>
<reference key="1">
    <citation type="journal article" date="2014" name="Genome Announc.">
        <title>Complete Genome Sequence of the Extreme Thermophile Dictyoglomus thermophilum H-6-12.</title>
        <authorList>
            <person name="Coil D.A."/>
            <person name="Badger J.H."/>
            <person name="Forberger H.C."/>
            <person name="Riggs F."/>
            <person name="Madupu R."/>
            <person name="Fedorova N."/>
            <person name="Ward N."/>
            <person name="Robb F.T."/>
            <person name="Eisen J.A."/>
        </authorList>
    </citation>
    <scope>NUCLEOTIDE SEQUENCE [LARGE SCALE GENOMIC DNA]</scope>
    <source>
        <strain>ATCC 35947 / DSM 3960 / H-6-12</strain>
    </source>
</reference>
<gene>
    <name evidence="1" type="primary">rimO</name>
    <name type="ordered locus">DICTH_1354</name>
</gene>
<feature type="chain" id="PRO_0000374810" description="Ribosomal protein uS12 methylthiotransferase RimO">
    <location>
        <begin position="1"/>
        <end position="440"/>
    </location>
</feature>
<feature type="domain" description="MTTase N-terminal" evidence="1">
    <location>
        <begin position="2"/>
        <end position="118"/>
    </location>
</feature>
<feature type="domain" description="Radical SAM core" evidence="2">
    <location>
        <begin position="140"/>
        <end position="370"/>
    </location>
</feature>
<feature type="domain" description="TRAM" evidence="1">
    <location>
        <begin position="373"/>
        <end position="440"/>
    </location>
</feature>
<feature type="binding site" evidence="1">
    <location>
        <position position="11"/>
    </location>
    <ligand>
        <name>[4Fe-4S] cluster</name>
        <dbReference type="ChEBI" id="CHEBI:49883"/>
        <label>1</label>
    </ligand>
</feature>
<feature type="binding site" evidence="1">
    <location>
        <position position="47"/>
    </location>
    <ligand>
        <name>[4Fe-4S] cluster</name>
        <dbReference type="ChEBI" id="CHEBI:49883"/>
        <label>1</label>
    </ligand>
</feature>
<feature type="binding site" evidence="1">
    <location>
        <position position="81"/>
    </location>
    <ligand>
        <name>[4Fe-4S] cluster</name>
        <dbReference type="ChEBI" id="CHEBI:49883"/>
        <label>1</label>
    </ligand>
</feature>
<feature type="binding site" evidence="1">
    <location>
        <position position="154"/>
    </location>
    <ligand>
        <name>[4Fe-4S] cluster</name>
        <dbReference type="ChEBI" id="CHEBI:49883"/>
        <label>2</label>
        <note>4Fe-4S-S-AdoMet</note>
    </ligand>
</feature>
<feature type="binding site" evidence="1">
    <location>
        <position position="158"/>
    </location>
    <ligand>
        <name>[4Fe-4S] cluster</name>
        <dbReference type="ChEBI" id="CHEBI:49883"/>
        <label>2</label>
        <note>4Fe-4S-S-AdoMet</note>
    </ligand>
</feature>
<feature type="binding site" evidence="1">
    <location>
        <position position="161"/>
    </location>
    <ligand>
        <name>[4Fe-4S] cluster</name>
        <dbReference type="ChEBI" id="CHEBI:49883"/>
        <label>2</label>
        <note>4Fe-4S-S-AdoMet</note>
    </ligand>
</feature>